<proteinExistence type="inferred from homology"/>
<gene>
    <name evidence="1" type="primary">astB</name>
    <name type="ordered locus">YpsIP31758_2118</name>
</gene>
<protein>
    <recommendedName>
        <fullName evidence="1">N-succinylarginine dihydrolase</fullName>
        <ecNumber evidence="1">3.5.3.23</ecNumber>
    </recommendedName>
</protein>
<reference key="1">
    <citation type="journal article" date="2007" name="PLoS Genet.">
        <title>The complete genome sequence of Yersinia pseudotuberculosis IP31758, the causative agent of Far East scarlet-like fever.</title>
        <authorList>
            <person name="Eppinger M."/>
            <person name="Rosovitz M.J."/>
            <person name="Fricke W.F."/>
            <person name="Rasko D.A."/>
            <person name="Kokorina G."/>
            <person name="Fayolle C."/>
            <person name="Lindler L.E."/>
            <person name="Carniel E."/>
            <person name="Ravel J."/>
        </authorList>
    </citation>
    <scope>NUCLEOTIDE SEQUENCE [LARGE SCALE GENOMIC DNA]</scope>
    <source>
        <strain>IP 31758</strain>
    </source>
</reference>
<keyword id="KW-0056">Arginine metabolism</keyword>
<keyword id="KW-0378">Hydrolase</keyword>
<dbReference type="EC" id="3.5.3.23" evidence="1"/>
<dbReference type="EMBL" id="CP000720">
    <property type="protein sequence ID" value="ABS46480.1"/>
    <property type="molecule type" value="Genomic_DNA"/>
</dbReference>
<dbReference type="RefSeq" id="WP_012105170.1">
    <property type="nucleotide sequence ID" value="NC_009708.1"/>
</dbReference>
<dbReference type="SMR" id="A7FIL3"/>
<dbReference type="KEGG" id="ypi:YpsIP31758_2118"/>
<dbReference type="HOGENOM" id="CLU_053835_0_0_6"/>
<dbReference type="UniPathway" id="UPA00185">
    <property type="reaction ID" value="UER00280"/>
</dbReference>
<dbReference type="Proteomes" id="UP000002412">
    <property type="component" value="Chromosome"/>
</dbReference>
<dbReference type="GO" id="GO:0009015">
    <property type="term" value="F:N-succinylarginine dihydrolase activity"/>
    <property type="evidence" value="ECO:0007669"/>
    <property type="project" value="UniProtKB-UniRule"/>
</dbReference>
<dbReference type="GO" id="GO:0019544">
    <property type="term" value="P:arginine catabolic process to glutamate"/>
    <property type="evidence" value="ECO:0007669"/>
    <property type="project" value="UniProtKB-UniRule"/>
</dbReference>
<dbReference type="GO" id="GO:0019545">
    <property type="term" value="P:arginine catabolic process to succinate"/>
    <property type="evidence" value="ECO:0007669"/>
    <property type="project" value="UniProtKB-UniRule"/>
</dbReference>
<dbReference type="Gene3D" id="3.75.10.20">
    <property type="entry name" value="Succinylarginine dihydrolase"/>
    <property type="match status" value="1"/>
</dbReference>
<dbReference type="HAMAP" id="MF_01172">
    <property type="entry name" value="AstB"/>
    <property type="match status" value="1"/>
</dbReference>
<dbReference type="InterPro" id="IPR037031">
    <property type="entry name" value="AstB_sf"/>
</dbReference>
<dbReference type="InterPro" id="IPR007079">
    <property type="entry name" value="SuccinylArg_d-Hdrlase_AstB"/>
</dbReference>
<dbReference type="NCBIfam" id="TIGR03241">
    <property type="entry name" value="arg_catab_astB"/>
    <property type="match status" value="1"/>
</dbReference>
<dbReference type="NCBIfam" id="NF009789">
    <property type="entry name" value="PRK13281.1"/>
    <property type="match status" value="1"/>
</dbReference>
<dbReference type="PANTHER" id="PTHR30420">
    <property type="entry name" value="N-SUCCINYLARGININE DIHYDROLASE"/>
    <property type="match status" value="1"/>
</dbReference>
<dbReference type="PANTHER" id="PTHR30420:SF2">
    <property type="entry name" value="N-SUCCINYLARGININE DIHYDROLASE"/>
    <property type="match status" value="1"/>
</dbReference>
<dbReference type="Pfam" id="PF04996">
    <property type="entry name" value="AstB"/>
    <property type="match status" value="1"/>
</dbReference>
<dbReference type="SUPFAM" id="SSF55909">
    <property type="entry name" value="Pentein"/>
    <property type="match status" value="1"/>
</dbReference>
<comment type="function">
    <text evidence="1">Catalyzes the hydrolysis of N(2)-succinylarginine into N(2)-succinylornithine, ammonia and CO(2).</text>
</comment>
<comment type="catalytic activity">
    <reaction evidence="1">
        <text>N(2)-succinyl-L-arginine + 2 H2O + 2 H(+) = N(2)-succinyl-L-ornithine + 2 NH4(+) + CO2</text>
        <dbReference type="Rhea" id="RHEA:19533"/>
        <dbReference type="ChEBI" id="CHEBI:15377"/>
        <dbReference type="ChEBI" id="CHEBI:15378"/>
        <dbReference type="ChEBI" id="CHEBI:16526"/>
        <dbReference type="ChEBI" id="CHEBI:28938"/>
        <dbReference type="ChEBI" id="CHEBI:58241"/>
        <dbReference type="ChEBI" id="CHEBI:58514"/>
        <dbReference type="EC" id="3.5.3.23"/>
    </reaction>
</comment>
<comment type="pathway">
    <text evidence="1">Amino-acid degradation; L-arginine degradation via AST pathway; L-glutamate and succinate from L-arginine: step 2/5.</text>
</comment>
<comment type="subunit">
    <text evidence="1">Homodimer.</text>
</comment>
<comment type="similarity">
    <text evidence="1">Belongs to the succinylarginine dihydrolase family.</text>
</comment>
<evidence type="ECO:0000255" key="1">
    <source>
        <dbReference type="HAMAP-Rule" id="MF_01172"/>
    </source>
</evidence>
<name>ASTB_YERP3</name>
<accession>A7FIL3</accession>
<sequence length="447" mass="49170">MAGYEVNFDGLVGLTHHYAGLSFGNEASTTHQNHTSNPRLAAKQGLLKMKALADLGYKQGVLPPQERPAIGVLRKLGFSGSDEQVLSDVARNAPRLLSAVSSASSMWTANAATVSPSADSADGRVHFTVANLHNKFHRAIEAETTAVLLPAVFNNHRHFVHHNALPSVTLLGDEGAANHNRLGGEYASPAIQMFVYGRQGMESGAVPGRYPARQTREASQAVARLHQLDPKRTVFVQQNPAVIDQGVFHNDVIAVSNRNVLFHHELAFLSSTQVMDDIRCKMAGLEQQLVNIEVPEAEVSVADAVSTYLFNSQLLHKANGKMLLVIPQESQDNPSVWRYLSELVSGDGPIDELRVFDLRESMRNGGGPACLRLRVVLNDAELQAVNSRVMLTPALFVTLNNWVDQHYRDHLQFKDLADPHLLQEGRQALDELTRILNLGPVYPFQRN</sequence>
<organism>
    <name type="scientific">Yersinia pseudotuberculosis serotype O:1b (strain IP 31758)</name>
    <dbReference type="NCBI Taxonomy" id="349747"/>
    <lineage>
        <taxon>Bacteria</taxon>
        <taxon>Pseudomonadati</taxon>
        <taxon>Pseudomonadota</taxon>
        <taxon>Gammaproteobacteria</taxon>
        <taxon>Enterobacterales</taxon>
        <taxon>Yersiniaceae</taxon>
        <taxon>Yersinia</taxon>
    </lineage>
</organism>
<feature type="chain" id="PRO_1000065743" description="N-succinylarginine dihydrolase">
    <location>
        <begin position="1"/>
        <end position="447"/>
    </location>
</feature>
<feature type="active site" evidence="1">
    <location>
        <position position="174"/>
    </location>
</feature>
<feature type="active site" evidence="1">
    <location>
        <position position="249"/>
    </location>
</feature>
<feature type="active site" description="Nucleophile" evidence="1">
    <location>
        <position position="370"/>
    </location>
</feature>
<feature type="binding site" evidence="1">
    <location>
        <begin position="19"/>
        <end position="28"/>
    </location>
    <ligand>
        <name>substrate</name>
    </ligand>
</feature>
<feature type="binding site" evidence="1">
    <location>
        <position position="110"/>
    </location>
    <ligand>
        <name>substrate</name>
    </ligand>
</feature>
<feature type="binding site" evidence="1">
    <location>
        <begin position="137"/>
        <end position="138"/>
    </location>
    <ligand>
        <name>substrate</name>
    </ligand>
</feature>
<feature type="binding site" evidence="1">
    <location>
        <position position="213"/>
    </location>
    <ligand>
        <name>substrate</name>
    </ligand>
</feature>
<feature type="binding site" evidence="1">
    <location>
        <position position="251"/>
    </location>
    <ligand>
        <name>substrate</name>
    </ligand>
</feature>
<feature type="binding site" evidence="1">
    <location>
        <position position="364"/>
    </location>
    <ligand>
        <name>substrate</name>
    </ligand>
</feature>